<keyword id="KW-0963">Cytoplasm</keyword>
<keyword id="KW-1185">Reference proteome</keyword>
<proteinExistence type="inferred from homology"/>
<feature type="chain" id="PRO_0000162491" description="Regulatory protein RecX">
    <location>
        <begin position="1"/>
        <end position="152"/>
    </location>
</feature>
<feature type="sequence conflict" description="In Ref. 1; AAA99921." evidence="2" ref="1">
    <original>QQ</original>
    <variation>HE</variation>
    <location>
        <begin position="78"/>
        <end position="79"/>
    </location>
</feature>
<name>RECX_VIBCH</name>
<reference key="1">
    <citation type="submission" date="1996-08" db="EMBL/GenBank/DDBJ databases">
        <authorList>
            <person name="Gupta N."/>
            <person name="Bhasin N."/>
            <person name="Ghosh A."/>
        </authorList>
    </citation>
    <scope>NUCLEOTIDE SEQUENCE [GENOMIC DNA]</scope>
    <source>
        <strain>ATCC 25870 / Classical Inaba 569B / Serotype O1</strain>
    </source>
</reference>
<reference key="2">
    <citation type="journal article" date="2000" name="Nature">
        <title>DNA sequence of both chromosomes of the cholera pathogen Vibrio cholerae.</title>
        <authorList>
            <person name="Heidelberg J.F."/>
            <person name="Eisen J.A."/>
            <person name="Nelson W.C."/>
            <person name="Clayton R.A."/>
            <person name="Gwinn M.L."/>
            <person name="Dodson R.J."/>
            <person name="Haft D.H."/>
            <person name="Hickey E.K."/>
            <person name="Peterson J.D."/>
            <person name="Umayam L.A."/>
            <person name="Gill S.R."/>
            <person name="Nelson K.E."/>
            <person name="Read T.D."/>
            <person name="Tettelin H."/>
            <person name="Richardson D.L."/>
            <person name="Ermolaeva M.D."/>
            <person name="Vamathevan J.J."/>
            <person name="Bass S."/>
            <person name="Qin H."/>
            <person name="Dragoi I."/>
            <person name="Sellers P."/>
            <person name="McDonald L.A."/>
            <person name="Utterback T.R."/>
            <person name="Fleischmann R.D."/>
            <person name="Nierman W.C."/>
            <person name="White O."/>
            <person name="Salzberg S.L."/>
            <person name="Smith H.O."/>
            <person name="Colwell R.R."/>
            <person name="Mekalanos J.J."/>
            <person name="Venter J.C."/>
            <person name="Fraser C.M."/>
        </authorList>
    </citation>
    <scope>NUCLEOTIDE SEQUENCE [LARGE SCALE GENOMIC DNA]</scope>
    <source>
        <strain>ATCC 39315 / El Tor Inaba N16961</strain>
    </source>
</reference>
<protein>
    <recommendedName>
        <fullName>Regulatory protein RecX</fullName>
    </recommendedName>
</protein>
<dbReference type="EMBL" id="L78074">
    <property type="protein sequence ID" value="AAA99921.1"/>
    <property type="molecule type" value="Genomic_DNA"/>
</dbReference>
<dbReference type="EMBL" id="AE003852">
    <property type="protein sequence ID" value="AAF93712.1"/>
    <property type="molecule type" value="Genomic_DNA"/>
</dbReference>
<dbReference type="PIR" id="F82310">
    <property type="entry name" value="F82310"/>
</dbReference>
<dbReference type="RefSeq" id="NP_230195.1">
    <property type="nucleotide sequence ID" value="NC_002505.1"/>
</dbReference>
<dbReference type="RefSeq" id="WP_000006855.1">
    <property type="nucleotide sequence ID" value="NZ_LT906614.1"/>
</dbReference>
<dbReference type="SMR" id="Q56647"/>
<dbReference type="STRING" id="243277.VC_0544"/>
<dbReference type="DNASU" id="2615213"/>
<dbReference type="EnsemblBacteria" id="AAF93712">
    <property type="protein sequence ID" value="AAF93712"/>
    <property type="gene ID" value="VC_0544"/>
</dbReference>
<dbReference type="KEGG" id="vch:VC_0544"/>
<dbReference type="PATRIC" id="fig|243277.26.peg.520"/>
<dbReference type="eggNOG" id="COG2137">
    <property type="taxonomic scope" value="Bacteria"/>
</dbReference>
<dbReference type="HOGENOM" id="CLU_066607_3_2_6"/>
<dbReference type="Proteomes" id="UP000000584">
    <property type="component" value="Chromosome 1"/>
</dbReference>
<dbReference type="GO" id="GO:0005737">
    <property type="term" value="C:cytoplasm"/>
    <property type="evidence" value="ECO:0007669"/>
    <property type="project" value="UniProtKB-SubCell"/>
</dbReference>
<dbReference type="GO" id="GO:0006282">
    <property type="term" value="P:regulation of DNA repair"/>
    <property type="evidence" value="ECO:0007669"/>
    <property type="project" value="UniProtKB-UniRule"/>
</dbReference>
<dbReference type="FunFam" id="1.10.10.10:FF:000847">
    <property type="entry name" value="Regulatory protein RecX"/>
    <property type="match status" value="1"/>
</dbReference>
<dbReference type="Gene3D" id="1.10.10.10">
    <property type="entry name" value="Winged helix-like DNA-binding domain superfamily/Winged helix DNA-binding domain"/>
    <property type="match status" value="3"/>
</dbReference>
<dbReference type="HAMAP" id="MF_01114">
    <property type="entry name" value="RecX"/>
    <property type="match status" value="1"/>
</dbReference>
<dbReference type="InterPro" id="IPR053926">
    <property type="entry name" value="RecX_HTH_1st"/>
</dbReference>
<dbReference type="InterPro" id="IPR053924">
    <property type="entry name" value="RecX_HTH_2nd"/>
</dbReference>
<dbReference type="InterPro" id="IPR053925">
    <property type="entry name" value="RecX_HTH_3rd"/>
</dbReference>
<dbReference type="InterPro" id="IPR003783">
    <property type="entry name" value="Regulatory_RecX"/>
</dbReference>
<dbReference type="InterPro" id="IPR036388">
    <property type="entry name" value="WH-like_DNA-bd_sf"/>
</dbReference>
<dbReference type="NCBIfam" id="NF001057">
    <property type="entry name" value="PRK00117.3-3"/>
    <property type="match status" value="1"/>
</dbReference>
<dbReference type="PANTHER" id="PTHR33602">
    <property type="entry name" value="REGULATORY PROTEIN RECX FAMILY PROTEIN"/>
    <property type="match status" value="1"/>
</dbReference>
<dbReference type="PANTHER" id="PTHR33602:SF1">
    <property type="entry name" value="REGULATORY PROTEIN RECX FAMILY PROTEIN"/>
    <property type="match status" value="1"/>
</dbReference>
<dbReference type="Pfam" id="PF21982">
    <property type="entry name" value="RecX_HTH1"/>
    <property type="match status" value="1"/>
</dbReference>
<dbReference type="Pfam" id="PF02631">
    <property type="entry name" value="RecX_HTH2"/>
    <property type="match status" value="1"/>
</dbReference>
<dbReference type="Pfam" id="PF21981">
    <property type="entry name" value="RecX_HTH3"/>
    <property type="match status" value="1"/>
</dbReference>
<comment type="function">
    <text evidence="1">Modulates RecA activity.</text>
</comment>
<comment type="subcellular location">
    <subcellularLocation>
        <location evidence="2">Cytoplasm</location>
    </subcellularLocation>
</comment>
<comment type="similarity">
    <text evidence="2">Belongs to the RecX family.</text>
</comment>
<evidence type="ECO:0000250" key="1"/>
<evidence type="ECO:0000305" key="2"/>
<gene>
    <name type="primary">recX</name>
    <name type="ordered locus">VC_0544</name>
</gene>
<organism>
    <name type="scientific">Vibrio cholerae serotype O1 (strain ATCC 39315 / El Tor Inaba N16961)</name>
    <dbReference type="NCBI Taxonomy" id="243277"/>
    <lineage>
        <taxon>Bacteria</taxon>
        <taxon>Pseudomonadati</taxon>
        <taxon>Pseudomonadota</taxon>
        <taxon>Gammaproteobacteria</taxon>
        <taxon>Vibrionales</taxon>
        <taxon>Vibrionaceae</taxon>
        <taxon>Vibrio</taxon>
    </lineage>
</organism>
<sequence>MSFDLATCRQSALQLLSRRDHSEYELYQKLALKGHPAEVIDEVVKYVLELGYLSDARYAASQARQIVHKGYGEQRLRQQLKEKRVAEEVIEQALAEQTIDWFELAKEVAHKKFKSGISHERSQYAKQVRYLQYRGFNFEQIRYALQASESDE</sequence>
<accession>Q56647</accession>
<accession>Q9KUH7</accession>